<reference evidence="7" key="1">
    <citation type="journal article" date="2012" name="Mol. Ecol.">
        <title>Whole transcriptome analysis of the coral Acropora millepora reveals complex responses to CO(2)-driven acidification during the initiation of calcification.</title>
        <authorList>
            <person name="Moya A."/>
            <person name="Huisman L."/>
            <person name="Ball E.E."/>
            <person name="Hayward D.C."/>
            <person name="Grasso L.C."/>
            <person name="Chua C.M."/>
            <person name="Woo H.N."/>
            <person name="Gattuso J.P."/>
            <person name="Foret S."/>
            <person name="Miller D.J."/>
        </authorList>
    </citation>
    <scope>NUCLEOTIDE SEQUENCE [MRNA]</scope>
</reference>
<reference evidence="7" key="2">
    <citation type="journal article" date="2013" name="Mol. Biol. Evol.">
        <title>The skeletal proteome of the coral Acropora millepora: the evolution of calcification by co-option and domain shuffling.</title>
        <authorList>
            <person name="Ramos-Silva P."/>
            <person name="Kaandorp J."/>
            <person name="Huisman L."/>
            <person name="Marie B."/>
            <person name="Zanella-Cleon I."/>
            <person name="Guichard N."/>
            <person name="Miller D.J."/>
            <person name="Marin F."/>
        </authorList>
    </citation>
    <scope>PROTEIN SEQUENCE OF 148-161; 288-304; 433-443 AND 693-704</scope>
    <scope>TISSUE SPECIFICITY</scope>
    <scope>IDENTIFICATION BY MASS SPECTROMETRY</scope>
</reference>
<keyword id="KW-0903">Direct protein sequencing</keyword>
<keyword id="KW-1015">Disulfide bond</keyword>
<keyword id="KW-0472">Membrane</keyword>
<keyword id="KW-0677">Repeat</keyword>
<keyword id="KW-0732">Signal</keyword>
<keyword id="KW-0812">Transmembrane</keyword>
<keyword id="KW-1133">Transmembrane helix</keyword>
<sequence>MWQILLAISIFSLSKLSNAQQQPKVAPPQITNFLAEDKVAPEEVKFRDTDVWQLVLPCRATGSNPLKWVWKHNNAEINKNKFIFDRDWELLSDGTLRARGLNISDRGTYQCFVEDTVTKVSTFSRKLRVEVTAVGDFKSHKDFTSSVKLGEPLNVECPPRGPSFGVTFAWTSKKARSIQFPISNRVAIDPSTGNLHIMYITEEDVSTFNDLEGIRCTISAANTFYSSGALTLQIIPGKEIKLSSPSFTSSTSSPNENAVEGRRKDLYCEATARPPPKLVWKKNGVELKSGIDFIEIPEAFEGRLLSITSVKESLHETTFTCEASNNQTIASGPAQQNFVLNVEVAPRWASKPPDSLKEIPISSNGNLSCDVYAQPEPEIKWYRDGREITQSSSKVEVSGSKLLFKDTTLDEAGIYQCSAENVHGMIVSSTYVKVLAIAPSFKNGFGPFYLFQDSEGRLKCDPEAAPRPSTFKWFDENGAEIKSGNGYTIEEDGTLVITKVERSQHAGKFSCYAKNFLGNATAEGTATVYDRTRIVRGPSDLSVNEGTRVDLRCEAVADSSLELHYTWKRDDATIEYNRRVQWLKDQNVLTIADLTVEDAGIYTCVAYTPQPKYSEAKASAIVNIAGAPFPPTNLMLSSECQNRNTTLSWVTGESNNASILYFLIERKSQYADDFWQVIANVTNPNATSHPLVKLAGNADLAFRIRAVNRFGPSRPSEPTGSFCRTIRAVPEKWPDNFRGVPGKAEELTIAWTAMRRVEWNGPGLYYKLWYRRVNSGDALVEVRREASSDSFVVPDAGYYRQWEFQIQAINEVGEGPKSPLVKQFSGQDPPTGKPEDVTVGTITARSVELSWKKVTFTRGSVDGYRIYFWGESRVSAKRRRRAIPGYASVTNVTGVNTERYTVTGLKPYTNYKFVITAYNSGGNGPESDQVAADTDEAEPGPPSDVQVFVFAKYILVTWQPPSEPNGVITNYRVGTETYTGSQPTDVTVNMEETGVEARRKLLRDLVPETNYVVEMQAATSKGWGTSFRKTEKTVAWAAPAKPEKPIVEGTAVDEVRVDYKFGLGGGYTHDFLVMFRKKIEGQEFQNTSWVDHFQQQSIIIGNLDPELYQFKTVARNDYPSQENPQESPASDITEARPRPGISNVGKRVSTPIYQSAWFIALLVLIALLLLVLLTFVLYTRHQGAKYLVGKREKKRAAALIDREHFDEEEGSFSNNGRADHPPPYPSQGSLPRGADSDRDSLDDYGEGPQFNEDGSFIEEYGDEKKAPPEEKDPSSLATFV</sequence>
<comment type="subcellular location">
    <subcellularLocation>
        <location evidence="1">Membrane</location>
        <topology evidence="1">Single-pass membrane protein</topology>
    </subcellularLocation>
    <text evidence="1 6">Presence in the organic matrix of the skeleton may be due to shedding of a soluble peptide.</text>
</comment>
<comment type="tissue specificity">
    <text evidence="5">Component of the acid-insoluble organic matrix of the aragonitic skeleton (at protein level).</text>
</comment>
<feature type="signal peptide" evidence="1">
    <location>
        <begin position="1"/>
        <end position="19"/>
    </location>
</feature>
<feature type="chain" id="PRO_0000429543" description="Fibronectin type III domain-containing protein" evidence="1">
    <location>
        <begin position="20"/>
        <end position="1280"/>
    </location>
</feature>
<feature type="topological domain" description="Extracellular" evidence="1">
    <location>
        <begin position="20"/>
        <end position="1156"/>
    </location>
</feature>
<feature type="transmembrane region" description="Helical" evidence="1">
    <location>
        <begin position="1157"/>
        <end position="1177"/>
    </location>
</feature>
<feature type="topological domain" description="Cytoplasmic" evidence="1">
    <location>
        <begin position="1178"/>
        <end position="1280"/>
    </location>
</feature>
<feature type="domain" description="Fibronectin type-III 1" evidence="3">
    <location>
        <begin position="628"/>
        <end position="722"/>
    </location>
</feature>
<feature type="domain" description="Fibronectin type-III 2" evidence="3">
    <location>
        <begin position="730"/>
        <end position="824"/>
    </location>
</feature>
<feature type="domain" description="Fibronectin type-III 3" evidence="3">
    <location>
        <begin position="830"/>
        <end position="933"/>
    </location>
</feature>
<feature type="domain" description="Fibronectin type-III 4" evidence="3">
    <location>
        <begin position="939"/>
        <end position="1033"/>
    </location>
</feature>
<feature type="domain" description="Fibronectin type-III 5" evidence="3">
    <location>
        <begin position="1039"/>
        <end position="1131"/>
    </location>
</feature>
<feature type="region of interest" description="Disordered" evidence="4">
    <location>
        <begin position="1118"/>
        <end position="1144"/>
    </location>
</feature>
<feature type="region of interest" description="Disordered" evidence="4">
    <location>
        <begin position="1206"/>
        <end position="1280"/>
    </location>
</feature>
<feature type="compositionally biased region" description="Polar residues" evidence="4">
    <location>
        <begin position="1118"/>
        <end position="1130"/>
    </location>
</feature>
<feature type="compositionally biased region" description="Basic and acidic residues" evidence="4">
    <location>
        <begin position="1262"/>
        <end position="1273"/>
    </location>
</feature>
<feature type="disulfide bond" evidence="2">
    <location>
        <begin position="58"/>
        <end position="111"/>
    </location>
</feature>
<feature type="disulfide bond" evidence="2">
    <location>
        <begin position="268"/>
        <end position="321"/>
    </location>
</feature>
<feature type="disulfide bond" evidence="2">
    <location>
        <begin position="369"/>
        <end position="417"/>
    </location>
</feature>
<feature type="disulfide bond" evidence="2">
    <location>
        <begin position="460"/>
        <end position="511"/>
    </location>
</feature>
<feature type="disulfide bond" evidence="2">
    <location>
        <begin position="553"/>
        <end position="604"/>
    </location>
</feature>
<accession>B8VIW9</accession>
<proteinExistence type="evidence at protein level"/>
<protein>
    <recommendedName>
        <fullName>Fibronectin type III domain-containing protein</fullName>
    </recommendedName>
    <alternativeName>
        <fullName evidence="6">Neuroglian-like protein</fullName>
    </alternativeName>
</protein>
<evidence type="ECO:0000255" key="1"/>
<evidence type="ECO:0000255" key="2">
    <source>
        <dbReference type="PROSITE-ProRule" id="PRU00114"/>
    </source>
</evidence>
<evidence type="ECO:0000255" key="3">
    <source>
        <dbReference type="PROSITE-ProRule" id="PRU00316"/>
    </source>
</evidence>
<evidence type="ECO:0000256" key="4">
    <source>
        <dbReference type="SAM" id="MobiDB-lite"/>
    </source>
</evidence>
<evidence type="ECO:0000269" key="5">
    <source>
    </source>
</evidence>
<evidence type="ECO:0000303" key="6">
    <source>
    </source>
</evidence>
<evidence type="ECO:0000305" key="7"/>
<organism>
    <name type="scientific">Acropora millepora</name>
    <name type="common">Staghorn coral</name>
    <name type="synonym">Heteropora millepora</name>
    <dbReference type="NCBI Taxonomy" id="45264"/>
    <lineage>
        <taxon>Eukaryota</taxon>
        <taxon>Metazoa</taxon>
        <taxon>Cnidaria</taxon>
        <taxon>Anthozoa</taxon>
        <taxon>Hexacorallia</taxon>
        <taxon>Scleractinia</taxon>
        <taxon>Astrocoeniina</taxon>
        <taxon>Acroporidae</taxon>
        <taxon>Acropora</taxon>
    </lineage>
</organism>
<dbReference type="EMBL" id="JR993827">
    <property type="status" value="NOT_ANNOTATED_CDS"/>
    <property type="molecule type" value="mRNA"/>
</dbReference>
<dbReference type="SMR" id="B8VIW9"/>
<dbReference type="OrthoDB" id="6022335at2759"/>
<dbReference type="GO" id="GO:0016020">
    <property type="term" value="C:membrane"/>
    <property type="evidence" value="ECO:0007669"/>
    <property type="project" value="UniProtKB-SubCell"/>
</dbReference>
<dbReference type="GO" id="GO:0098609">
    <property type="term" value="P:cell-cell adhesion"/>
    <property type="evidence" value="ECO:0007669"/>
    <property type="project" value="TreeGrafter"/>
</dbReference>
<dbReference type="CDD" id="cd00063">
    <property type="entry name" value="FN3"/>
    <property type="match status" value="4"/>
</dbReference>
<dbReference type="CDD" id="cd00096">
    <property type="entry name" value="Ig"/>
    <property type="match status" value="2"/>
</dbReference>
<dbReference type="FunFam" id="2.60.40.10:FF:000028">
    <property type="entry name" value="Neuronal cell adhesion molecule"/>
    <property type="match status" value="1"/>
</dbReference>
<dbReference type="Gene3D" id="2.60.40.10">
    <property type="entry name" value="Immunoglobulins"/>
    <property type="match status" value="9"/>
</dbReference>
<dbReference type="InterPro" id="IPR003961">
    <property type="entry name" value="FN3_dom"/>
</dbReference>
<dbReference type="InterPro" id="IPR036116">
    <property type="entry name" value="FN3_sf"/>
</dbReference>
<dbReference type="InterPro" id="IPR007110">
    <property type="entry name" value="Ig-like_dom"/>
</dbReference>
<dbReference type="InterPro" id="IPR036179">
    <property type="entry name" value="Ig-like_dom_sf"/>
</dbReference>
<dbReference type="InterPro" id="IPR013783">
    <property type="entry name" value="Ig-like_fold"/>
</dbReference>
<dbReference type="InterPro" id="IPR003599">
    <property type="entry name" value="Ig_sub"/>
</dbReference>
<dbReference type="InterPro" id="IPR003598">
    <property type="entry name" value="Ig_sub2"/>
</dbReference>
<dbReference type="InterPro" id="IPR013151">
    <property type="entry name" value="Immunoglobulin_dom"/>
</dbReference>
<dbReference type="InterPro" id="IPR026966">
    <property type="entry name" value="Neurofascin/L1/NrCAM_C"/>
</dbReference>
<dbReference type="PANTHER" id="PTHR44170:SF6">
    <property type="entry name" value="CONTACTIN"/>
    <property type="match status" value="1"/>
</dbReference>
<dbReference type="PANTHER" id="PTHR44170">
    <property type="entry name" value="PROTEIN SIDEKICK"/>
    <property type="match status" value="1"/>
</dbReference>
<dbReference type="Pfam" id="PF13882">
    <property type="entry name" value="Bravo_FIGEY"/>
    <property type="match status" value="1"/>
</dbReference>
<dbReference type="Pfam" id="PF00041">
    <property type="entry name" value="fn3"/>
    <property type="match status" value="2"/>
</dbReference>
<dbReference type="Pfam" id="PF00047">
    <property type="entry name" value="ig"/>
    <property type="match status" value="1"/>
</dbReference>
<dbReference type="Pfam" id="PF13927">
    <property type="entry name" value="Ig_3"/>
    <property type="match status" value="3"/>
</dbReference>
<dbReference type="SMART" id="SM00060">
    <property type="entry name" value="FN3"/>
    <property type="match status" value="5"/>
</dbReference>
<dbReference type="SMART" id="SM00409">
    <property type="entry name" value="IG"/>
    <property type="match status" value="6"/>
</dbReference>
<dbReference type="SMART" id="SM00408">
    <property type="entry name" value="IGc2"/>
    <property type="match status" value="5"/>
</dbReference>
<dbReference type="SUPFAM" id="SSF49265">
    <property type="entry name" value="Fibronectin type III"/>
    <property type="match status" value="3"/>
</dbReference>
<dbReference type="SUPFAM" id="SSF48726">
    <property type="entry name" value="Immunoglobulin"/>
    <property type="match status" value="5"/>
</dbReference>
<dbReference type="PROSITE" id="PS50853">
    <property type="entry name" value="FN3"/>
    <property type="match status" value="5"/>
</dbReference>
<dbReference type="PROSITE" id="PS50835">
    <property type="entry name" value="IG_LIKE"/>
    <property type="match status" value="5"/>
</dbReference>
<name>FP_ACRMI</name>